<organism>
    <name type="scientific">Borreliella burgdorferi (strain ATCC 35210 / DSM 4680 / CIP 102532 / B31)</name>
    <name type="common">Borrelia burgdorferi</name>
    <dbReference type="NCBI Taxonomy" id="224326"/>
    <lineage>
        <taxon>Bacteria</taxon>
        <taxon>Pseudomonadati</taxon>
        <taxon>Spirochaetota</taxon>
        <taxon>Spirochaetia</taxon>
        <taxon>Spirochaetales</taxon>
        <taxon>Borreliaceae</taxon>
        <taxon>Borreliella</taxon>
    </lineage>
</organism>
<proteinExistence type="evidence at protein level"/>
<comment type="similarity">
    <text evidence="1">Belongs to the universal ribosomal protein uL29 family.</text>
</comment>
<keyword id="KW-0002">3D-structure</keyword>
<keyword id="KW-1185">Reference proteome</keyword>
<keyword id="KW-0687">Ribonucleoprotein</keyword>
<keyword id="KW-0689">Ribosomal protein</keyword>
<reference key="1">
    <citation type="journal article" date="1997" name="Nature">
        <title>Genomic sequence of a Lyme disease spirochaete, Borrelia burgdorferi.</title>
        <authorList>
            <person name="Fraser C.M."/>
            <person name="Casjens S."/>
            <person name="Huang W.M."/>
            <person name="Sutton G.G."/>
            <person name="Clayton R.A."/>
            <person name="Lathigra R."/>
            <person name="White O."/>
            <person name="Ketchum K.A."/>
            <person name="Dodson R.J."/>
            <person name="Hickey E.K."/>
            <person name="Gwinn M.L."/>
            <person name="Dougherty B.A."/>
            <person name="Tomb J.-F."/>
            <person name="Fleischmann R.D."/>
            <person name="Richardson D.L."/>
            <person name="Peterson J.D."/>
            <person name="Kerlavage A.R."/>
            <person name="Quackenbush J."/>
            <person name="Salzberg S.L."/>
            <person name="Hanson M."/>
            <person name="van Vugt R."/>
            <person name="Palmer N."/>
            <person name="Adams M.D."/>
            <person name="Gocayne J.D."/>
            <person name="Weidman J.F."/>
            <person name="Utterback T.R."/>
            <person name="Watthey L."/>
            <person name="McDonald L.A."/>
            <person name="Artiach P."/>
            <person name="Bowman C."/>
            <person name="Garland S.A."/>
            <person name="Fujii C."/>
            <person name="Cotton M.D."/>
            <person name="Horst K."/>
            <person name="Roberts K.M."/>
            <person name="Hatch B."/>
            <person name="Smith H.O."/>
            <person name="Venter J.C."/>
        </authorList>
    </citation>
    <scope>NUCLEOTIDE SEQUENCE [LARGE SCALE GENOMIC DNA]</scope>
    <source>
        <strain>ATCC 35210 / DSM 4680 / CIP 102532 / B31</strain>
    </source>
</reference>
<sequence length="65" mass="7897">MKNFKNFTLEDMKAKRLELKKEYLDLRFKSVVGHVENPLKKREIRRDIARLNTMICEYELGIRKV</sequence>
<gene>
    <name type="primary">rpmC</name>
    <name type="ordered locus">BB_0486</name>
</gene>
<name>RL29_BORBU</name>
<feature type="chain" id="PRO_0000130360" description="Large ribosomal subunit protein uL29">
    <location>
        <begin position="1"/>
        <end position="65"/>
    </location>
</feature>
<feature type="helix" evidence="2">
    <location>
        <begin position="9"/>
        <end position="32"/>
    </location>
</feature>
<feature type="helix" evidence="2">
    <location>
        <begin position="40"/>
        <end position="60"/>
    </location>
</feature>
<feature type="strand" evidence="2">
    <location>
        <begin position="61"/>
        <end position="63"/>
    </location>
</feature>
<evidence type="ECO:0000305" key="1"/>
<evidence type="ECO:0007829" key="2">
    <source>
        <dbReference type="PDB" id="8FN2"/>
    </source>
</evidence>
<dbReference type="EMBL" id="AE000783">
    <property type="protein sequence ID" value="AAC66856.2"/>
    <property type="molecule type" value="Genomic_DNA"/>
</dbReference>
<dbReference type="PIR" id="E70160">
    <property type="entry name" value="E70160"/>
</dbReference>
<dbReference type="RefSeq" id="NP_212620.2">
    <property type="nucleotide sequence ID" value="NC_001318.1"/>
</dbReference>
<dbReference type="PDB" id="8FMW">
    <property type="method" value="EM"/>
    <property type="resolution" value="2.86 A"/>
    <property type="chains" value="Aa=1-65"/>
</dbReference>
<dbReference type="PDB" id="8FN2">
    <property type="method" value="EM"/>
    <property type="resolution" value="3.40 A"/>
    <property type="chains" value="a=1-65"/>
</dbReference>
<dbReference type="PDBsum" id="8FMW"/>
<dbReference type="PDBsum" id="8FN2"/>
<dbReference type="EMDB" id="EMD-29298"/>
<dbReference type="EMDB" id="EMD-29304"/>
<dbReference type="SMR" id="O51439"/>
<dbReference type="STRING" id="224326.BB_0486"/>
<dbReference type="PaxDb" id="224326-BB_0486"/>
<dbReference type="EnsemblBacteria" id="AAC66856">
    <property type="protein sequence ID" value="AAC66856"/>
    <property type="gene ID" value="BB_0486"/>
</dbReference>
<dbReference type="KEGG" id="bbu:BB_0486"/>
<dbReference type="PATRIC" id="fig|224326.49.peg.877"/>
<dbReference type="HOGENOM" id="CLU_158491_5_0_12"/>
<dbReference type="OrthoDB" id="371096at2"/>
<dbReference type="Proteomes" id="UP000001807">
    <property type="component" value="Chromosome"/>
</dbReference>
<dbReference type="GO" id="GO:1990904">
    <property type="term" value="C:ribonucleoprotein complex"/>
    <property type="evidence" value="ECO:0007669"/>
    <property type="project" value="UniProtKB-KW"/>
</dbReference>
<dbReference type="GO" id="GO:0005840">
    <property type="term" value="C:ribosome"/>
    <property type="evidence" value="ECO:0007669"/>
    <property type="project" value="UniProtKB-KW"/>
</dbReference>
<dbReference type="GO" id="GO:0003735">
    <property type="term" value="F:structural constituent of ribosome"/>
    <property type="evidence" value="ECO:0007669"/>
    <property type="project" value="InterPro"/>
</dbReference>
<dbReference type="GO" id="GO:0006412">
    <property type="term" value="P:translation"/>
    <property type="evidence" value="ECO:0007669"/>
    <property type="project" value="UniProtKB-UniRule"/>
</dbReference>
<dbReference type="CDD" id="cd00427">
    <property type="entry name" value="Ribosomal_L29_HIP"/>
    <property type="match status" value="1"/>
</dbReference>
<dbReference type="Gene3D" id="1.10.287.310">
    <property type="match status" value="1"/>
</dbReference>
<dbReference type="HAMAP" id="MF_00374">
    <property type="entry name" value="Ribosomal_uL29"/>
    <property type="match status" value="1"/>
</dbReference>
<dbReference type="InterPro" id="IPR001854">
    <property type="entry name" value="Ribosomal_uL29"/>
</dbReference>
<dbReference type="InterPro" id="IPR036049">
    <property type="entry name" value="Ribosomal_uL29_sf"/>
</dbReference>
<dbReference type="NCBIfam" id="TIGR00012">
    <property type="entry name" value="L29"/>
    <property type="match status" value="1"/>
</dbReference>
<dbReference type="Pfam" id="PF00831">
    <property type="entry name" value="Ribosomal_L29"/>
    <property type="match status" value="1"/>
</dbReference>
<dbReference type="SUPFAM" id="SSF46561">
    <property type="entry name" value="Ribosomal protein L29 (L29p)"/>
    <property type="match status" value="1"/>
</dbReference>
<accession>O51439</accession>
<protein>
    <recommendedName>
        <fullName evidence="1">Large ribosomal subunit protein uL29</fullName>
    </recommendedName>
    <alternativeName>
        <fullName>50S ribosomal protein L29</fullName>
    </alternativeName>
</protein>